<dbReference type="EMBL" id="DQ387964">
    <property type="protein sequence ID" value="ABD38847.1"/>
    <property type="molecule type" value="Genomic_DNA"/>
</dbReference>
<dbReference type="SMR" id="Q1A1A3"/>
<dbReference type="GO" id="GO:0005634">
    <property type="term" value="C:nucleus"/>
    <property type="evidence" value="ECO:0007669"/>
    <property type="project" value="UniProtKB-SubCell"/>
</dbReference>
<dbReference type="GO" id="GO:0003700">
    <property type="term" value="F:DNA-binding transcription factor activity"/>
    <property type="evidence" value="ECO:0007669"/>
    <property type="project" value="InterPro"/>
</dbReference>
<dbReference type="GO" id="GO:1990837">
    <property type="term" value="F:sequence-specific double-stranded DNA binding"/>
    <property type="evidence" value="ECO:0007669"/>
    <property type="project" value="TreeGrafter"/>
</dbReference>
<dbReference type="GO" id="GO:0006357">
    <property type="term" value="P:regulation of transcription by RNA polymerase II"/>
    <property type="evidence" value="ECO:0007669"/>
    <property type="project" value="TreeGrafter"/>
</dbReference>
<dbReference type="CDD" id="cd20021">
    <property type="entry name" value="FH_FOXG"/>
    <property type="match status" value="1"/>
</dbReference>
<dbReference type="FunFam" id="1.10.10.10:FF:000135">
    <property type="entry name" value="forkhead box protein G1"/>
    <property type="match status" value="1"/>
</dbReference>
<dbReference type="Gene3D" id="1.10.10.10">
    <property type="entry name" value="Winged helix-like DNA-binding domain superfamily/Winged helix DNA-binding domain"/>
    <property type="match status" value="1"/>
</dbReference>
<dbReference type="InterPro" id="IPR001766">
    <property type="entry name" value="Fork_head_dom"/>
</dbReference>
<dbReference type="InterPro" id="IPR047208">
    <property type="entry name" value="FOXG1"/>
</dbReference>
<dbReference type="InterPro" id="IPR018122">
    <property type="entry name" value="TF_fork_head_CS_1"/>
</dbReference>
<dbReference type="InterPro" id="IPR030456">
    <property type="entry name" value="TF_fork_head_CS_2"/>
</dbReference>
<dbReference type="InterPro" id="IPR036388">
    <property type="entry name" value="WH-like_DNA-bd_sf"/>
</dbReference>
<dbReference type="InterPro" id="IPR036390">
    <property type="entry name" value="WH_DNA-bd_sf"/>
</dbReference>
<dbReference type="PANTHER" id="PTHR46617">
    <property type="entry name" value="FORKHEAD BOX PROTEIN G1"/>
    <property type="match status" value="1"/>
</dbReference>
<dbReference type="PANTHER" id="PTHR46617:SF3">
    <property type="entry name" value="FORKHEAD BOX PROTEIN G1"/>
    <property type="match status" value="1"/>
</dbReference>
<dbReference type="Pfam" id="PF00250">
    <property type="entry name" value="Forkhead"/>
    <property type="match status" value="1"/>
</dbReference>
<dbReference type="PRINTS" id="PR00053">
    <property type="entry name" value="FORKHEAD"/>
</dbReference>
<dbReference type="SMART" id="SM00339">
    <property type="entry name" value="FH"/>
    <property type="match status" value="1"/>
</dbReference>
<dbReference type="SUPFAM" id="SSF81995">
    <property type="entry name" value="beta-sandwich domain of Sec23/24"/>
    <property type="match status" value="1"/>
</dbReference>
<dbReference type="SUPFAM" id="SSF46785">
    <property type="entry name" value="Winged helix' DNA-binding domain"/>
    <property type="match status" value="1"/>
</dbReference>
<dbReference type="PROSITE" id="PS00657">
    <property type="entry name" value="FORK_HEAD_1"/>
    <property type="match status" value="1"/>
</dbReference>
<dbReference type="PROSITE" id="PS00658">
    <property type="entry name" value="FORK_HEAD_2"/>
    <property type="match status" value="1"/>
</dbReference>
<dbReference type="PROSITE" id="PS50039">
    <property type="entry name" value="FORK_HEAD_3"/>
    <property type="match status" value="1"/>
</dbReference>
<gene>
    <name type="primary">FOXG1</name>
</gene>
<sequence>MLDMGDRKEVKMIPKSSFSINSLVPEAVQNDNHHASHGHHNSHHPQHHHHHHHHHHPPPPAPQPPPPPQQQPPPPPQAPQPPQARGAPAADDDKGPQQLLLPPPPPPAAALDGAKADGLGGKGEPGGGGPGELAPVGPDEKEKGAGAGGEEKKGAGEGGKDGEGGKEGEKKNGKYEKPPFSYNALIMMAIRQSPEKRLTLNGIYEFIMKNFPYYRENKQGWQNSIRHNLSLNKCFVKVPRHYDDPGKGNYWMLDPSSDDVFIGGTTGKLRRRSTTSRAKLAFKRGARLTSTGLTFMDRAGSLYWPMSPFLSLHHPRASSTLSYNGTTSAYPSHPMPYSSVLTQNSLGNNHSFSTANGLSVDRLVNGEIPYATHHLTAAALAASVPCGLSVPCSGTYSLNPCSVNLLAGQTSYFFPHVPHPSMTSQSSTSMSARAASSSTSPQAPSTLPCESLRPSLPSFTTGLSGGLSDYFTHQNQGSSSNPLIH</sequence>
<keyword id="KW-0217">Developmental protein</keyword>
<keyword id="KW-0238">DNA-binding</keyword>
<keyword id="KW-0539">Nucleus</keyword>
<keyword id="KW-0656">Proto-oncogene</keyword>
<keyword id="KW-0804">Transcription</keyword>
<keyword id="KW-0805">Transcription regulation</keyword>
<evidence type="ECO:0000250" key="1"/>
<evidence type="ECO:0000250" key="2">
    <source>
        <dbReference type="UniProtKB" id="P55316"/>
    </source>
</evidence>
<evidence type="ECO:0000250" key="3">
    <source>
        <dbReference type="UniProtKB" id="Q60987"/>
    </source>
</evidence>
<evidence type="ECO:0000255" key="4">
    <source>
        <dbReference type="PROSITE-ProRule" id="PRU00089"/>
    </source>
</evidence>
<evidence type="ECO:0000256" key="5">
    <source>
        <dbReference type="SAM" id="MobiDB-lite"/>
    </source>
</evidence>
<organism>
    <name type="scientific">Epomophorus gambianus</name>
    <name type="common">Gambian epauletted fruit bat</name>
    <name type="synonym">Pteropus gambianus</name>
    <dbReference type="NCBI Taxonomy" id="372077"/>
    <lineage>
        <taxon>Eukaryota</taxon>
        <taxon>Metazoa</taxon>
        <taxon>Chordata</taxon>
        <taxon>Craniata</taxon>
        <taxon>Vertebrata</taxon>
        <taxon>Euteleostomi</taxon>
        <taxon>Mammalia</taxon>
        <taxon>Eutheria</taxon>
        <taxon>Laurasiatheria</taxon>
        <taxon>Chiroptera</taxon>
        <taxon>Yinpterochiroptera</taxon>
        <taxon>Pteropodoidea</taxon>
        <taxon>Pteropodidae</taxon>
        <taxon>Epomophorinae</taxon>
        <taxon>Epomophorini</taxon>
        <taxon>Epomophorus</taxon>
    </lineage>
</organism>
<feature type="chain" id="PRO_0000254886" description="Forkhead box protein G1">
    <location>
        <begin position="1"/>
        <end position="485"/>
    </location>
</feature>
<feature type="DNA-binding region" description="Fork-head" evidence="4">
    <location>
        <begin position="177"/>
        <end position="271"/>
    </location>
</feature>
<feature type="region of interest" description="Disordered" evidence="5">
    <location>
        <begin position="31"/>
        <end position="177"/>
    </location>
</feature>
<feature type="region of interest" description="Required for interaction with TLE6" evidence="3">
    <location>
        <begin position="245"/>
        <end position="340"/>
    </location>
</feature>
<feature type="region of interest" description="Interaction with KDM5B" evidence="1">
    <location>
        <begin position="379"/>
        <end position="402"/>
    </location>
</feature>
<feature type="region of interest" description="Disordered" evidence="5">
    <location>
        <begin position="423"/>
        <end position="451"/>
    </location>
</feature>
<feature type="compositionally biased region" description="Basic residues" evidence="5">
    <location>
        <begin position="35"/>
        <end position="57"/>
    </location>
</feature>
<feature type="compositionally biased region" description="Pro residues" evidence="5">
    <location>
        <begin position="58"/>
        <end position="82"/>
    </location>
</feature>
<feature type="compositionally biased region" description="Gly residues" evidence="5">
    <location>
        <begin position="118"/>
        <end position="131"/>
    </location>
</feature>
<feature type="compositionally biased region" description="Basic and acidic residues" evidence="5">
    <location>
        <begin position="138"/>
        <end position="177"/>
    </location>
</feature>
<feature type="compositionally biased region" description="Low complexity" evidence="5">
    <location>
        <begin position="423"/>
        <end position="446"/>
    </location>
</feature>
<name>FOXG1_EPOGA</name>
<reference key="1">
    <citation type="submission" date="2006-02" db="EMBL/GenBank/DDBJ databases">
        <title>Evolutionary evolution of forkhead box G1.</title>
        <authorList>
            <person name="Bredenkamp N."/>
            <person name="Illing N."/>
        </authorList>
    </citation>
    <scope>NUCLEOTIDE SEQUENCE [GENOMIC DNA]</scope>
</reference>
<protein>
    <recommendedName>
        <fullName>Forkhead box protein G1</fullName>
        <shortName>FoxG1</shortName>
    </recommendedName>
</protein>
<accession>Q1A1A3</accession>
<proteinExistence type="inferred from homology"/>
<comment type="function">
    <text evidence="2">Transcription repression factor which plays an important role in the establishment of the regional subdivision of the developing brain and in the development of the telencephalon.</text>
</comment>
<comment type="subunit">
    <text evidence="2 3">Interacts with KDM5B (By similarity). Interacts with GRG6/TLE6 (By similarity). Interacts with TLE1; the interaction is inhibited by interaction with TLE6/GRG6 (By similarity).</text>
</comment>
<comment type="subcellular location">
    <subcellularLocation>
        <location evidence="4">Nucleus</location>
    </subcellularLocation>
</comment>